<organism>
    <name type="scientific">Staphylococcus epidermidis (strain ATCC 12228 / FDA PCI 1200)</name>
    <dbReference type="NCBI Taxonomy" id="176280"/>
    <lineage>
        <taxon>Bacteria</taxon>
        <taxon>Bacillati</taxon>
        <taxon>Bacillota</taxon>
        <taxon>Bacilli</taxon>
        <taxon>Bacillales</taxon>
        <taxon>Staphylococcaceae</taxon>
        <taxon>Staphylococcus</taxon>
    </lineage>
</organism>
<keyword id="KW-0066">ATP synthesis</keyword>
<keyword id="KW-1003">Cell membrane</keyword>
<keyword id="KW-0139">CF(1)</keyword>
<keyword id="KW-0375">Hydrogen ion transport</keyword>
<keyword id="KW-0406">Ion transport</keyword>
<keyword id="KW-0472">Membrane</keyword>
<keyword id="KW-0813">Transport</keyword>
<proteinExistence type="inferred from homology"/>
<evidence type="ECO:0000255" key="1">
    <source>
        <dbReference type="HAMAP-Rule" id="MF_01416"/>
    </source>
</evidence>
<feature type="chain" id="PRO_0000193486" description="ATP synthase subunit delta">
    <location>
        <begin position="1"/>
        <end position="179"/>
    </location>
</feature>
<comment type="function">
    <text evidence="1">F(1)F(0) ATP synthase produces ATP from ADP in the presence of a proton or sodium gradient. F-type ATPases consist of two structural domains, F(1) containing the extramembraneous catalytic core and F(0) containing the membrane proton channel, linked together by a central stalk and a peripheral stalk. During catalysis, ATP synthesis in the catalytic domain of F(1) is coupled via a rotary mechanism of the central stalk subunits to proton translocation.</text>
</comment>
<comment type="function">
    <text evidence="1">This protein is part of the stalk that links CF(0) to CF(1). It either transmits conformational changes from CF(0) to CF(1) or is implicated in proton conduction.</text>
</comment>
<comment type="subunit">
    <text evidence="1">F-type ATPases have 2 components, F(1) - the catalytic core - and F(0) - the membrane proton channel. F(1) has five subunits: alpha(3), beta(3), gamma(1), delta(1), epsilon(1). F(0) has three main subunits: a(1), b(2) and c(10-14). The alpha and beta chains form an alternating ring which encloses part of the gamma chain. F(1) is attached to F(0) by a central stalk formed by the gamma and epsilon chains, while a peripheral stalk is formed by the delta and b chains.</text>
</comment>
<comment type="subcellular location">
    <subcellularLocation>
        <location evidence="1">Cell membrane</location>
        <topology evidence="1">Peripheral membrane protein</topology>
    </subcellularLocation>
</comment>
<comment type="similarity">
    <text evidence="1">Belongs to the ATPase delta chain family.</text>
</comment>
<gene>
    <name evidence="1" type="primary">atpH</name>
    <name type="ordered locus">SE_1703</name>
</gene>
<dbReference type="EMBL" id="AE015929">
    <property type="protein sequence ID" value="AAO05302.1"/>
    <property type="molecule type" value="Genomic_DNA"/>
</dbReference>
<dbReference type="RefSeq" id="NP_765258.1">
    <property type="nucleotide sequence ID" value="NC_004461.1"/>
</dbReference>
<dbReference type="RefSeq" id="WP_001829963.1">
    <property type="nucleotide sequence ID" value="NZ_WBME01000021.1"/>
</dbReference>
<dbReference type="SMR" id="Q8CNJ4"/>
<dbReference type="KEGG" id="sep:SE_1703"/>
<dbReference type="PATRIC" id="fig|176280.10.peg.1664"/>
<dbReference type="eggNOG" id="COG0712">
    <property type="taxonomic scope" value="Bacteria"/>
</dbReference>
<dbReference type="HOGENOM" id="CLU_085114_4_1_9"/>
<dbReference type="OrthoDB" id="9802471at2"/>
<dbReference type="Proteomes" id="UP000001411">
    <property type="component" value="Chromosome"/>
</dbReference>
<dbReference type="GO" id="GO:0005886">
    <property type="term" value="C:plasma membrane"/>
    <property type="evidence" value="ECO:0007669"/>
    <property type="project" value="UniProtKB-SubCell"/>
</dbReference>
<dbReference type="GO" id="GO:0045259">
    <property type="term" value="C:proton-transporting ATP synthase complex"/>
    <property type="evidence" value="ECO:0007669"/>
    <property type="project" value="UniProtKB-KW"/>
</dbReference>
<dbReference type="GO" id="GO:0046933">
    <property type="term" value="F:proton-transporting ATP synthase activity, rotational mechanism"/>
    <property type="evidence" value="ECO:0007669"/>
    <property type="project" value="UniProtKB-UniRule"/>
</dbReference>
<dbReference type="Gene3D" id="1.10.520.20">
    <property type="entry name" value="N-terminal domain of the delta subunit of the F1F0-ATP synthase"/>
    <property type="match status" value="1"/>
</dbReference>
<dbReference type="HAMAP" id="MF_01416">
    <property type="entry name" value="ATP_synth_delta_bact"/>
    <property type="match status" value="1"/>
</dbReference>
<dbReference type="InterPro" id="IPR026015">
    <property type="entry name" value="ATP_synth_OSCP/delta_N_sf"/>
</dbReference>
<dbReference type="InterPro" id="IPR020781">
    <property type="entry name" value="ATPase_OSCP/d_CS"/>
</dbReference>
<dbReference type="InterPro" id="IPR000711">
    <property type="entry name" value="ATPase_OSCP/dsu"/>
</dbReference>
<dbReference type="NCBIfam" id="TIGR01145">
    <property type="entry name" value="ATP_synt_delta"/>
    <property type="match status" value="1"/>
</dbReference>
<dbReference type="NCBIfam" id="NF004399">
    <property type="entry name" value="PRK05758.1-1"/>
    <property type="match status" value="1"/>
</dbReference>
<dbReference type="PANTHER" id="PTHR11910">
    <property type="entry name" value="ATP SYNTHASE DELTA CHAIN"/>
    <property type="match status" value="1"/>
</dbReference>
<dbReference type="Pfam" id="PF00213">
    <property type="entry name" value="OSCP"/>
    <property type="match status" value="1"/>
</dbReference>
<dbReference type="PRINTS" id="PR00125">
    <property type="entry name" value="ATPASEDELTA"/>
</dbReference>
<dbReference type="SUPFAM" id="SSF47928">
    <property type="entry name" value="N-terminal domain of the delta subunit of the F1F0-ATP synthase"/>
    <property type="match status" value="1"/>
</dbReference>
<dbReference type="PROSITE" id="PS00389">
    <property type="entry name" value="ATPASE_DELTA"/>
    <property type="match status" value="1"/>
</dbReference>
<accession>Q8CNJ4</accession>
<sequence>MAKVAKKYAKALFDVALDTNQLDVVYEDLETISHSSFDFIKQLKAIDSNPSLTANQREEFVERVYNEANPYVVNTLKVLADNRHISIVENVFKSFQNLYNKYYKQDFAIIESTYELSEDEISRIVELIKKQTELSNVIVNTKINQDLIGGFRVKVGTTVMDGSVRNDLVQLQRKFERAN</sequence>
<name>ATPD_STAES</name>
<protein>
    <recommendedName>
        <fullName evidence="1">ATP synthase subunit delta</fullName>
    </recommendedName>
    <alternativeName>
        <fullName evidence="1">ATP synthase F(1) sector subunit delta</fullName>
    </alternativeName>
    <alternativeName>
        <fullName evidence="1">F-type ATPase subunit delta</fullName>
        <shortName evidence="1">F-ATPase subunit delta</shortName>
    </alternativeName>
</protein>
<reference key="1">
    <citation type="journal article" date="2003" name="Mol. Microbiol.">
        <title>Genome-based analysis of virulence genes in a non-biofilm-forming Staphylococcus epidermidis strain (ATCC 12228).</title>
        <authorList>
            <person name="Zhang Y.-Q."/>
            <person name="Ren S.-X."/>
            <person name="Li H.-L."/>
            <person name="Wang Y.-X."/>
            <person name="Fu G."/>
            <person name="Yang J."/>
            <person name="Qin Z.-Q."/>
            <person name="Miao Y.-G."/>
            <person name="Wang W.-Y."/>
            <person name="Chen R.-S."/>
            <person name="Shen Y."/>
            <person name="Chen Z."/>
            <person name="Yuan Z.-H."/>
            <person name="Zhao G.-P."/>
            <person name="Qu D."/>
            <person name="Danchin A."/>
            <person name="Wen Y.-M."/>
        </authorList>
    </citation>
    <scope>NUCLEOTIDE SEQUENCE [LARGE SCALE GENOMIC DNA]</scope>
    <source>
        <strain>ATCC 12228 / FDA PCI 1200</strain>
    </source>
</reference>